<feature type="chain" id="PRO_0000277791" description="Integration host factor subunit alpha">
    <location>
        <begin position="1"/>
        <end position="99"/>
    </location>
</feature>
<organism>
    <name type="scientific">Xanthomonas oryzae pv. oryzae (strain MAFF 311018)</name>
    <dbReference type="NCBI Taxonomy" id="342109"/>
    <lineage>
        <taxon>Bacteria</taxon>
        <taxon>Pseudomonadati</taxon>
        <taxon>Pseudomonadota</taxon>
        <taxon>Gammaproteobacteria</taxon>
        <taxon>Lysobacterales</taxon>
        <taxon>Lysobacteraceae</taxon>
        <taxon>Xanthomonas</taxon>
    </lineage>
</organism>
<proteinExistence type="inferred from homology"/>
<dbReference type="EMBL" id="AP008229">
    <property type="protein sequence ID" value="BAE69776.1"/>
    <property type="molecule type" value="Genomic_DNA"/>
</dbReference>
<dbReference type="RefSeq" id="WP_002811076.1">
    <property type="nucleotide sequence ID" value="NC_007705.1"/>
</dbReference>
<dbReference type="SMR" id="Q2P101"/>
<dbReference type="KEGG" id="xom:XOO3021"/>
<dbReference type="HOGENOM" id="CLU_105066_1_3_6"/>
<dbReference type="GO" id="GO:0005829">
    <property type="term" value="C:cytosol"/>
    <property type="evidence" value="ECO:0007669"/>
    <property type="project" value="TreeGrafter"/>
</dbReference>
<dbReference type="GO" id="GO:0003677">
    <property type="term" value="F:DNA binding"/>
    <property type="evidence" value="ECO:0007669"/>
    <property type="project" value="UniProtKB-UniRule"/>
</dbReference>
<dbReference type="GO" id="GO:0030527">
    <property type="term" value="F:structural constituent of chromatin"/>
    <property type="evidence" value="ECO:0007669"/>
    <property type="project" value="InterPro"/>
</dbReference>
<dbReference type="GO" id="GO:0006310">
    <property type="term" value="P:DNA recombination"/>
    <property type="evidence" value="ECO:0007669"/>
    <property type="project" value="UniProtKB-UniRule"/>
</dbReference>
<dbReference type="GO" id="GO:0009893">
    <property type="term" value="P:positive regulation of metabolic process"/>
    <property type="evidence" value="ECO:0007669"/>
    <property type="project" value="UniProtKB-ARBA"/>
</dbReference>
<dbReference type="GO" id="GO:0006355">
    <property type="term" value="P:regulation of DNA-templated transcription"/>
    <property type="evidence" value="ECO:0007669"/>
    <property type="project" value="UniProtKB-UniRule"/>
</dbReference>
<dbReference type="GO" id="GO:0006417">
    <property type="term" value="P:regulation of translation"/>
    <property type="evidence" value="ECO:0007669"/>
    <property type="project" value="UniProtKB-UniRule"/>
</dbReference>
<dbReference type="CDD" id="cd13835">
    <property type="entry name" value="IHF_A"/>
    <property type="match status" value="1"/>
</dbReference>
<dbReference type="FunFam" id="4.10.520.10:FF:000002">
    <property type="entry name" value="Integration host factor subunit alpha"/>
    <property type="match status" value="1"/>
</dbReference>
<dbReference type="Gene3D" id="4.10.520.10">
    <property type="entry name" value="IHF-like DNA-binding proteins"/>
    <property type="match status" value="1"/>
</dbReference>
<dbReference type="HAMAP" id="MF_00380">
    <property type="entry name" value="IHF_alpha"/>
    <property type="match status" value="1"/>
</dbReference>
<dbReference type="InterPro" id="IPR000119">
    <property type="entry name" value="Hist_DNA-bd"/>
</dbReference>
<dbReference type="InterPro" id="IPR020816">
    <property type="entry name" value="Histone-like_DNA-bd_CS"/>
</dbReference>
<dbReference type="InterPro" id="IPR010992">
    <property type="entry name" value="IHF-like_DNA-bd_dom_sf"/>
</dbReference>
<dbReference type="InterPro" id="IPR005684">
    <property type="entry name" value="IHF_alpha"/>
</dbReference>
<dbReference type="NCBIfam" id="TIGR00987">
    <property type="entry name" value="himA"/>
    <property type="match status" value="1"/>
</dbReference>
<dbReference type="NCBIfam" id="NF001401">
    <property type="entry name" value="PRK00285.1"/>
    <property type="match status" value="1"/>
</dbReference>
<dbReference type="PANTHER" id="PTHR33175">
    <property type="entry name" value="DNA-BINDING PROTEIN HU"/>
    <property type="match status" value="1"/>
</dbReference>
<dbReference type="PANTHER" id="PTHR33175:SF2">
    <property type="entry name" value="INTEGRATION HOST FACTOR SUBUNIT ALPHA"/>
    <property type="match status" value="1"/>
</dbReference>
<dbReference type="Pfam" id="PF00216">
    <property type="entry name" value="Bac_DNA_binding"/>
    <property type="match status" value="1"/>
</dbReference>
<dbReference type="PRINTS" id="PR01727">
    <property type="entry name" value="DNABINDINGHU"/>
</dbReference>
<dbReference type="SMART" id="SM00411">
    <property type="entry name" value="BHL"/>
    <property type="match status" value="1"/>
</dbReference>
<dbReference type="SUPFAM" id="SSF47729">
    <property type="entry name" value="IHF-like DNA-binding proteins"/>
    <property type="match status" value="1"/>
</dbReference>
<dbReference type="PROSITE" id="PS00045">
    <property type="entry name" value="HISTONE_LIKE"/>
    <property type="match status" value="1"/>
</dbReference>
<sequence>MALTKAEMAERLFDEVGLNKREAKEFVDAFFDVLRDALEQGRQVKLSGFGNFDLRRKNQRPGRNPKTGEEIPISARTVVTFRPGQKLKERVEAYAGSGQ</sequence>
<name>IHFA_XANOM</name>
<keyword id="KW-0233">DNA recombination</keyword>
<keyword id="KW-0238">DNA-binding</keyword>
<keyword id="KW-0804">Transcription</keyword>
<keyword id="KW-0805">Transcription regulation</keyword>
<keyword id="KW-0810">Translation regulation</keyword>
<protein>
    <recommendedName>
        <fullName evidence="1">Integration host factor subunit alpha</fullName>
        <shortName evidence="1">IHF-alpha</shortName>
    </recommendedName>
</protein>
<comment type="function">
    <text evidence="1">This protein is one of the two subunits of integration host factor, a specific DNA-binding protein that functions in genetic recombination as well as in transcriptional and translational control.</text>
</comment>
<comment type="subunit">
    <text evidence="1">Heterodimer of an alpha and a beta chain.</text>
</comment>
<comment type="similarity">
    <text evidence="1">Belongs to the bacterial histone-like protein family.</text>
</comment>
<accession>Q2P101</accession>
<reference key="1">
    <citation type="journal article" date="2005" name="Jpn. Agric. Res. Q.">
        <title>Genome sequence of Xanthomonas oryzae pv. oryzae suggests contribution of large numbers of effector genes and insertion sequences to its race diversity.</title>
        <authorList>
            <person name="Ochiai H."/>
            <person name="Inoue Y."/>
            <person name="Takeya M."/>
            <person name="Sasaki A."/>
            <person name="Kaku H."/>
        </authorList>
    </citation>
    <scope>NUCLEOTIDE SEQUENCE [LARGE SCALE GENOMIC DNA]</scope>
    <source>
        <strain>MAFF 311018</strain>
    </source>
</reference>
<gene>
    <name evidence="1" type="primary">ihfA</name>
    <name evidence="1" type="synonym">himA</name>
    <name type="ordered locus">XOO3021</name>
</gene>
<evidence type="ECO:0000255" key="1">
    <source>
        <dbReference type="HAMAP-Rule" id="MF_00380"/>
    </source>
</evidence>